<protein>
    <recommendedName>
        <fullName evidence="3">Lipoprotein MlpH</fullName>
    </recommendedName>
</protein>
<proteinExistence type="evidence at transcript level"/>
<accession>Q9S069</accession>
<dbReference type="EMBL" id="AE001580">
    <property type="protein sequence ID" value="AAF07641.1"/>
    <property type="molecule type" value="Genomic_DNA"/>
</dbReference>
<dbReference type="RefSeq" id="NP_051405.1">
    <property type="nucleotide sequence ID" value="NC_000953.1"/>
</dbReference>
<dbReference type="RefSeq" id="WP_010883871.1">
    <property type="nucleotide sequence ID" value="NC_000953.1"/>
</dbReference>
<dbReference type="SMR" id="Q9S069"/>
<dbReference type="EnsemblBacteria" id="AAF07641">
    <property type="protein sequence ID" value="AAF07641"/>
    <property type="gene ID" value="BB_L28"/>
</dbReference>
<dbReference type="KEGG" id="bbu:BB_L28"/>
<dbReference type="PATRIC" id="fig|224326.49.peg.240"/>
<dbReference type="HOGENOM" id="CLU_134260_0_0_12"/>
<dbReference type="OrthoDB" id="351076at2"/>
<dbReference type="Proteomes" id="UP000001807">
    <property type="component" value="Plasmid cp32-8"/>
</dbReference>
<dbReference type="GO" id="GO:0009279">
    <property type="term" value="C:cell outer membrane"/>
    <property type="evidence" value="ECO:0007669"/>
    <property type="project" value="UniProtKB-SubCell"/>
</dbReference>
<dbReference type="InterPro" id="IPR004983">
    <property type="entry name" value="Mlp"/>
</dbReference>
<dbReference type="Pfam" id="PF03304">
    <property type="entry name" value="Mlp"/>
    <property type="match status" value="1"/>
</dbReference>
<feature type="signal peptide" evidence="4">
    <location>
        <begin position="1"/>
        <end position="17"/>
    </location>
</feature>
<feature type="chain" id="PRO_5004332379" description="Lipoprotein MlpH" evidence="4">
    <location>
        <begin position="18"/>
        <end position="148"/>
    </location>
</feature>
<feature type="region of interest" description="Disordered" evidence="1">
    <location>
        <begin position="26"/>
        <end position="61"/>
    </location>
</feature>
<feature type="compositionally biased region" description="Basic and acidic residues" evidence="1">
    <location>
        <begin position="40"/>
        <end position="61"/>
    </location>
</feature>
<feature type="lipid moiety-binding region" description="N-palmitoyl cysteine" evidence="4">
    <location>
        <position position="18"/>
    </location>
</feature>
<feature type="lipid moiety-binding region" description="S-diacylglycerol cysteine" evidence="4">
    <location>
        <position position="18"/>
    </location>
</feature>
<reference key="1">
    <citation type="journal article" date="1997" name="Nature">
        <title>Genomic sequence of a Lyme disease spirochaete, Borrelia burgdorferi.</title>
        <authorList>
            <person name="Fraser C.M."/>
            <person name="Casjens S."/>
            <person name="Huang W.M."/>
            <person name="Sutton G.G."/>
            <person name="Clayton R.A."/>
            <person name="Lathigra R."/>
            <person name="White O."/>
            <person name="Ketchum K.A."/>
            <person name="Dodson R.J."/>
            <person name="Hickey E.K."/>
            <person name="Gwinn M.L."/>
            <person name="Dougherty B.A."/>
            <person name="Tomb J.-F."/>
            <person name="Fleischmann R.D."/>
            <person name="Richardson D.L."/>
            <person name="Peterson J.D."/>
            <person name="Kerlavage A.R."/>
            <person name="Quackenbush J."/>
            <person name="Salzberg S.L."/>
            <person name="Hanson M."/>
            <person name="van Vugt R."/>
            <person name="Palmer N."/>
            <person name="Adams M.D."/>
            <person name="Gocayne J.D."/>
            <person name="Weidman J.F."/>
            <person name="Utterback T.R."/>
            <person name="Watthey L."/>
            <person name="McDonald L.A."/>
            <person name="Artiach P."/>
            <person name="Bowman C."/>
            <person name="Garland S.A."/>
            <person name="Fujii C."/>
            <person name="Cotton M.D."/>
            <person name="Horst K."/>
            <person name="Roberts K.M."/>
            <person name="Hatch B."/>
            <person name="Smith H.O."/>
            <person name="Venter J.C."/>
        </authorList>
    </citation>
    <scope>NUCLEOTIDE SEQUENCE [LARGE SCALE GENOMIC DNA]</scope>
    <source>
        <strain>ATCC 35210 / DSM 4680 / CIP 102532 / B31</strain>
    </source>
</reference>
<reference key="2">
    <citation type="journal article" date="2000" name="Mol. Microbiol.">
        <title>A bacterial genome in flux: the twelve linear and nine circular extrachromosomal DNAs in an infectious isolate of the Lyme disease spirochete Borrelia burgdorferi.</title>
        <authorList>
            <person name="Casjens S."/>
            <person name="Palmer N."/>
            <person name="van Vugt R."/>
            <person name="Huang W.M."/>
            <person name="Stevenson B."/>
            <person name="Rosa P."/>
            <person name="Lathigra R."/>
            <person name="Sutton G.G."/>
            <person name="Peterson J.D."/>
            <person name="Dodson R.J."/>
            <person name="Haft D.H."/>
            <person name="Hickey E.K."/>
            <person name="Gwinn M.L."/>
            <person name="White O."/>
            <person name="Fraser C.M."/>
        </authorList>
    </citation>
    <scope>NUCLEOTIDE SEQUENCE [LARGE SCALE GENOMIC DNA]</scope>
    <source>
        <strain>ATCC 35210 / DSM 4680 / CIP 102532 / B31</strain>
    </source>
</reference>
<reference key="3">
    <citation type="journal article" date="2000" name="Infect. Immun.">
        <title>Expression and immunological analysis of the plasmid-borne mlp genes of Borrelia burgdorferi strain B31.</title>
        <authorList>
            <person name="Porcella S.F."/>
            <person name="Fitzpatrick C.A."/>
            <person name="Bono J.L."/>
        </authorList>
    </citation>
    <scope>FUNCTION</scope>
    <scope>ANTIGENICITY</scope>
    <scope>SUBCELLULAR LOCATION</scope>
    <scope>INDUCTION AT 35 DEGREES CELSIUS</scope>
    <source>
        <strain>B31-4A</strain>
        <plasmid>cp32-8</plasmid>
    </source>
</reference>
<geneLocation type="plasmid">
    <name>cp32-8</name>
</geneLocation>
<sequence length="148" mass="16626">MKIINILFCLFLLMLNGCNSNDNDTLKNNAQQTKSRRKRDLTQKEVTQEKPKSKEELLREKLNDDQKTQLDWLKTALTDAGEFDKFLENNEDKIKSALDHIKSELDKCNGKENGDVQKNTFKQVVQGALKGGIDGFGASNATTTCNGS</sequence>
<name>MLPH_BORBU</name>
<gene>
    <name evidence="3" type="primary">mlpH</name>
    <name type="ordered locus">BB_L28</name>
</gene>
<keyword id="KW-0998">Cell outer membrane</keyword>
<keyword id="KW-0449">Lipoprotein</keyword>
<keyword id="KW-0472">Membrane</keyword>
<keyword id="KW-0564">Palmitate</keyword>
<keyword id="KW-0614">Plasmid</keyword>
<keyword id="KW-1185">Reference proteome</keyword>
<keyword id="KW-0732">Signal</keyword>
<comment type="function">
    <text evidence="2 5">An outer membrane protein that may participate in pathogenesis. Some human Lyme disease patients have antibodies against this protein (PubMed:10948116). The Mlp proteins probably undergo intragenic recombination, generating new alleles (Probable).</text>
</comment>
<comment type="subcellular location">
    <subcellularLocation>
        <location evidence="5">Cell outer membrane</location>
        <topology evidence="5">Lipid-anchor</topology>
    </subcellularLocation>
</comment>
<comment type="induction">
    <text evidence="2">Induced when grown at 35 degrees Celsius.</text>
</comment>
<comment type="similarity">
    <text evidence="4">Belongs to the Multicopy lipoprotein (Mlp) family.</text>
</comment>
<organism>
    <name type="scientific">Borreliella burgdorferi (strain ATCC 35210 / DSM 4680 / CIP 102532 / B31)</name>
    <name type="common">Borrelia burgdorferi</name>
    <dbReference type="NCBI Taxonomy" id="224326"/>
    <lineage>
        <taxon>Bacteria</taxon>
        <taxon>Pseudomonadati</taxon>
        <taxon>Spirochaetota</taxon>
        <taxon>Spirochaetia</taxon>
        <taxon>Spirochaetales</taxon>
        <taxon>Borreliaceae</taxon>
        <taxon>Borreliella</taxon>
    </lineage>
</organism>
<evidence type="ECO:0000256" key="1">
    <source>
        <dbReference type="SAM" id="MobiDB-lite"/>
    </source>
</evidence>
<evidence type="ECO:0000269" key="2">
    <source>
    </source>
</evidence>
<evidence type="ECO:0000303" key="3">
    <source>
    </source>
</evidence>
<evidence type="ECO:0000305" key="4"/>
<evidence type="ECO:0000305" key="5">
    <source>
    </source>
</evidence>